<sequence length="811" mass="89053">MEGVGAVRFWLVVCGCLAFPPRAESVCPERCDCQHPQHLLCTNRGLRAVPKTSSLPSPQDVLTYSLGGNFITNITAFDFHRLGQLRRLDLQYNQIRSLHPKTFEKLSRLEELYLGNNLLQALAPGTLAPLRKLRILYANGNEIGRLSRGSFEGLESLVKLRLDGNVLGALPDAVFAPLGNLLYLHLEANRIRFLGKNAFTQLGKLRFLNLSANELQPSLRHAATFVPLRSLSTLILSANSLQHLGPRVFQHLPRLGLLSLSGNQLTHLAPEAFWGLEALRELRLEGNRLNQLPLTLLEPLHSLEALDLSGNELSALHPATFGHQGRLRELSLRDNALSALSGDIFAASPALYRLDLDGNGWTCDCRLRGLKRWMGNWHSQGRLLTVFVQCRHPPALRGKYLDYLDDQLLQNGSCVDPSPSPTAGSRQWPISTAPGEGMTPPAGLAQELPLQPQPQPQQRGRLLPGVAWAGAAKELVGNRSALRLNRRGPGLQHQSPSAAAASGSAPQSLDLHEKPERGRPTRANLPQTEPTPTSEPASGTPSARDSWQRAAKQRLASEQQGRAVQYDSGVGLPPLVSDPCDFNKFILCNLTVEAVSANSASVRWAVREHRSPRPQGGARFRLLFDRFGQQPKFQRFVYLPERSDSATLHELRGDTPYLVCVEGVLGGRVCPVAPRDHCAGLVTLPEAGGRGGVDYQLLTLVLLAINALLVLLALAAWGSRWLRRKLRARRKGGAPVHVRHMYSTRRPLRSMGTGVSADFSGFQSHRPRTTVCALSEADLIEFPCDRFMDSSGGGTGGSLRREDHLLQRFAD</sequence>
<name>TRIL_RAT</name>
<feature type="signal peptide" evidence="2">
    <location>
        <begin position="1"/>
        <end position="25"/>
    </location>
</feature>
<feature type="chain" id="PRO_0000349257" description="TLR4 interactor with leucine rich repeats">
    <location>
        <begin position="26"/>
        <end position="811"/>
    </location>
</feature>
<feature type="topological domain" description="Extracellular" evidence="2">
    <location>
        <begin position="26"/>
        <end position="696"/>
    </location>
</feature>
<feature type="transmembrane region" description="Helical" evidence="2">
    <location>
        <begin position="697"/>
        <end position="717"/>
    </location>
</feature>
<feature type="topological domain" description="Cytoplasmic" evidence="2">
    <location>
        <begin position="718"/>
        <end position="809"/>
    </location>
</feature>
<feature type="domain" description="LRRNT">
    <location>
        <begin position="26"/>
        <end position="57"/>
    </location>
</feature>
<feature type="repeat" description="LRR 1">
    <location>
        <begin position="61"/>
        <end position="81"/>
    </location>
</feature>
<feature type="repeat" description="LRR 2">
    <location>
        <begin position="84"/>
        <end position="105"/>
    </location>
</feature>
<feature type="repeat" description="LRR 3">
    <location>
        <begin position="108"/>
        <end position="129"/>
    </location>
</feature>
<feature type="repeat" description="LRR 4">
    <location>
        <begin position="132"/>
        <end position="153"/>
    </location>
</feature>
<feature type="repeat" description="LRR 5">
    <location>
        <begin position="156"/>
        <end position="177"/>
    </location>
</feature>
<feature type="repeat" description="LRR 6">
    <location>
        <begin position="180"/>
        <end position="201"/>
    </location>
</feature>
<feature type="repeat" description="LRR 7">
    <location>
        <begin position="204"/>
        <end position="223"/>
    </location>
</feature>
<feature type="repeat" description="LRR 8">
    <location>
        <begin position="230"/>
        <end position="251"/>
    </location>
</feature>
<feature type="repeat" description="LRR 9">
    <location>
        <begin position="254"/>
        <end position="275"/>
    </location>
</feature>
<feature type="repeat" description="LRR 10">
    <location>
        <begin position="278"/>
        <end position="298"/>
    </location>
</feature>
<feature type="repeat" description="LRR 11">
    <location>
        <begin position="302"/>
        <end position="323"/>
    </location>
</feature>
<feature type="repeat" description="LRR 12">
    <location>
        <begin position="326"/>
        <end position="347"/>
    </location>
</feature>
<feature type="domain" description="LRRCT">
    <location>
        <begin position="359"/>
        <end position="416"/>
    </location>
</feature>
<feature type="region of interest" description="Disordered" evidence="3">
    <location>
        <begin position="414"/>
        <end position="460"/>
    </location>
</feature>
<feature type="region of interest" description="Disordered" evidence="3">
    <location>
        <begin position="486"/>
        <end position="562"/>
    </location>
</feature>
<feature type="compositionally biased region" description="Polar residues" evidence="3">
    <location>
        <begin position="421"/>
        <end position="430"/>
    </location>
</feature>
<feature type="compositionally biased region" description="Low complexity" evidence="3">
    <location>
        <begin position="440"/>
        <end position="460"/>
    </location>
</feature>
<feature type="compositionally biased region" description="Low complexity" evidence="3">
    <location>
        <begin position="494"/>
        <end position="508"/>
    </location>
</feature>
<feature type="compositionally biased region" description="Basic and acidic residues" evidence="3">
    <location>
        <begin position="510"/>
        <end position="519"/>
    </location>
</feature>
<feature type="compositionally biased region" description="Polar residues" evidence="3">
    <location>
        <begin position="524"/>
        <end position="545"/>
    </location>
</feature>
<feature type="modified residue" description="Phosphoserine" evidence="6">
    <location>
        <position position="798"/>
    </location>
</feature>
<feature type="glycosylation site" description="N-linked (GlcNAc...) asparagine" evidence="2">
    <location>
        <position position="73"/>
    </location>
</feature>
<feature type="glycosylation site" description="N-linked (GlcNAc...) asparagine" evidence="2">
    <location>
        <position position="411"/>
    </location>
</feature>
<feature type="glycosylation site" description="N-linked (GlcNAc...) asparagine" evidence="2">
    <location>
        <position position="589"/>
    </location>
</feature>
<dbReference type="EMBL" id="BC100659">
    <property type="protein sequence ID" value="AAI00660.1"/>
    <property type="molecule type" value="mRNA"/>
</dbReference>
<dbReference type="RefSeq" id="NP_001029182.1">
    <property type="nucleotide sequence ID" value="NM_001034010.2"/>
</dbReference>
<dbReference type="SMR" id="Q496Z2"/>
<dbReference type="FunCoup" id="Q496Z2">
    <property type="interactions" value="496"/>
</dbReference>
<dbReference type="STRING" id="10116.ENSRNOP00000037327"/>
<dbReference type="GlyCosmos" id="Q496Z2">
    <property type="glycosylation" value="3 sites, No reported glycans"/>
</dbReference>
<dbReference type="GlyGen" id="Q496Z2">
    <property type="glycosylation" value="5 sites"/>
</dbReference>
<dbReference type="iPTMnet" id="Q496Z2"/>
<dbReference type="PhosphoSitePlus" id="Q496Z2"/>
<dbReference type="PaxDb" id="10116-ENSRNOP00000037327"/>
<dbReference type="Ensembl" id="ENSRNOT00000036951.3">
    <property type="protein sequence ID" value="ENSRNOP00000037327.1"/>
    <property type="gene ID" value="ENSRNOG00000026941.3"/>
</dbReference>
<dbReference type="GeneID" id="362364"/>
<dbReference type="KEGG" id="rno:362364"/>
<dbReference type="UCSC" id="RGD:1310827">
    <property type="organism name" value="rat"/>
</dbReference>
<dbReference type="AGR" id="RGD:1310827"/>
<dbReference type="CTD" id="9865"/>
<dbReference type="RGD" id="1310827">
    <property type="gene designation" value="Tril"/>
</dbReference>
<dbReference type="eggNOG" id="KOG0619">
    <property type="taxonomic scope" value="Eukaryota"/>
</dbReference>
<dbReference type="GeneTree" id="ENSGT00940000161975"/>
<dbReference type="HOGENOM" id="CLU_357128_0_0_1"/>
<dbReference type="InParanoid" id="Q496Z2"/>
<dbReference type="OMA" id="TDPCDFN"/>
<dbReference type="OrthoDB" id="62239at9989"/>
<dbReference type="PhylomeDB" id="Q496Z2"/>
<dbReference type="TreeFam" id="TF331598"/>
<dbReference type="PRO" id="PR:Q496Z2"/>
<dbReference type="Proteomes" id="UP000002494">
    <property type="component" value="Chromosome 4"/>
</dbReference>
<dbReference type="Bgee" id="ENSRNOG00000026941">
    <property type="expression patterns" value="Expressed in Ammon's horn and 19 other cell types or tissues"/>
</dbReference>
<dbReference type="GO" id="GO:0031012">
    <property type="term" value="C:extracellular matrix"/>
    <property type="evidence" value="ECO:0000318"/>
    <property type="project" value="GO_Central"/>
</dbReference>
<dbReference type="GO" id="GO:0005615">
    <property type="term" value="C:extracellular space"/>
    <property type="evidence" value="ECO:0000318"/>
    <property type="project" value="GO_Central"/>
</dbReference>
<dbReference type="GO" id="GO:0046696">
    <property type="term" value="C:lipopolysaccharide receptor complex"/>
    <property type="evidence" value="ECO:0000266"/>
    <property type="project" value="RGD"/>
</dbReference>
<dbReference type="GO" id="GO:0001530">
    <property type="term" value="F:lipopolysaccharide binding"/>
    <property type="evidence" value="ECO:0000266"/>
    <property type="project" value="RGD"/>
</dbReference>
<dbReference type="GO" id="GO:0006954">
    <property type="term" value="P:inflammatory response"/>
    <property type="evidence" value="ECO:0007669"/>
    <property type="project" value="UniProtKB-KW"/>
</dbReference>
<dbReference type="GO" id="GO:0045087">
    <property type="term" value="P:innate immune response"/>
    <property type="evidence" value="ECO:0007669"/>
    <property type="project" value="UniProtKB-KW"/>
</dbReference>
<dbReference type="GO" id="GO:0002718">
    <property type="term" value="P:regulation of cytokine production involved in immune response"/>
    <property type="evidence" value="ECO:0000266"/>
    <property type="project" value="RGD"/>
</dbReference>
<dbReference type="GO" id="GO:0034142">
    <property type="term" value="P:toll-like receptor 4 signaling pathway"/>
    <property type="evidence" value="ECO:0000266"/>
    <property type="project" value="RGD"/>
</dbReference>
<dbReference type="CDD" id="cd00063">
    <property type="entry name" value="FN3"/>
    <property type="match status" value="1"/>
</dbReference>
<dbReference type="FunFam" id="3.80.10.10:FF:000169">
    <property type="entry name" value="TLR4 interactor with leucine rich repeats"/>
    <property type="match status" value="1"/>
</dbReference>
<dbReference type="FunFam" id="3.80.10.10:FF:000247">
    <property type="entry name" value="TLR4 interactor with leucine rich repeats"/>
    <property type="match status" value="1"/>
</dbReference>
<dbReference type="Gene3D" id="3.80.10.10">
    <property type="entry name" value="Ribonuclease Inhibitor"/>
    <property type="match status" value="2"/>
</dbReference>
<dbReference type="InterPro" id="IPR050328">
    <property type="entry name" value="Dev_Immune_Receptor"/>
</dbReference>
<dbReference type="InterPro" id="IPR003961">
    <property type="entry name" value="FN3_dom"/>
</dbReference>
<dbReference type="InterPro" id="IPR036116">
    <property type="entry name" value="FN3_sf"/>
</dbReference>
<dbReference type="InterPro" id="IPR001611">
    <property type="entry name" value="Leu-rich_rpt"/>
</dbReference>
<dbReference type="InterPro" id="IPR003591">
    <property type="entry name" value="Leu-rich_rpt_typical-subtyp"/>
</dbReference>
<dbReference type="InterPro" id="IPR032675">
    <property type="entry name" value="LRR_dom_sf"/>
</dbReference>
<dbReference type="PANTHER" id="PTHR24373">
    <property type="entry name" value="SLIT RELATED LEUCINE-RICH REPEAT NEURONAL PROTEIN"/>
    <property type="match status" value="1"/>
</dbReference>
<dbReference type="PANTHER" id="PTHR24373:SF307">
    <property type="entry name" value="TLR4 INTERACTOR WITH LEUCINE RICH REPEATS"/>
    <property type="match status" value="1"/>
</dbReference>
<dbReference type="Pfam" id="PF13855">
    <property type="entry name" value="LRR_8"/>
    <property type="match status" value="4"/>
</dbReference>
<dbReference type="SMART" id="SM00369">
    <property type="entry name" value="LRR_TYP"/>
    <property type="match status" value="11"/>
</dbReference>
<dbReference type="SUPFAM" id="SSF49265">
    <property type="entry name" value="Fibronectin type III"/>
    <property type="match status" value="1"/>
</dbReference>
<dbReference type="SUPFAM" id="SSF52058">
    <property type="entry name" value="L domain-like"/>
    <property type="match status" value="1"/>
</dbReference>
<dbReference type="PROSITE" id="PS51450">
    <property type="entry name" value="LRR"/>
    <property type="match status" value="13"/>
</dbReference>
<proteinExistence type="evidence at protein level"/>
<reference key="1">
    <citation type="journal article" date="2004" name="Genome Res.">
        <title>The status, quality, and expansion of the NIH full-length cDNA project: the Mammalian Gene Collection (MGC).</title>
        <authorList>
            <consortium name="The MGC Project Team"/>
        </authorList>
    </citation>
    <scope>NUCLEOTIDE SEQUENCE [LARGE SCALE MRNA]</scope>
    <source>
        <tissue>Prostate</tissue>
    </source>
</reference>
<reference key="2">
    <citation type="journal article" date="2009" name="J. Immunol.">
        <title>TRIL, a functional component of the TLR4 signaling complex, highly expressed in brain.</title>
        <authorList>
            <person name="Carpenter S."/>
            <person name="Carlson T."/>
            <person name="Dellacasagrande J."/>
            <person name="Garcia A."/>
            <person name="Gibbons S."/>
            <person name="Hertzog P."/>
            <person name="Lyons A."/>
            <person name="Lin L.L."/>
            <person name="Lynch M."/>
            <person name="Monie T."/>
            <person name="Murphy C."/>
            <person name="Seidl K.J."/>
            <person name="Wells C."/>
            <person name="Dunne A."/>
            <person name="O'Neill L.A."/>
        </authorList>
    </citation>
    <scope>TISSUE SPECIFICITY</scope>
</reference>
<reference key="3">
    <citation type="journal article" date="2012" name="Nat. Commun.">
        <title>Quantitative maps of protein phosphorylation sites across 14 different rat organs and tissues.</title>
        <authorList>
            <person name="Lundby A."/>
            <person name="Secher A."/>
            <person name="Lage K."/>
            <person name="Nordsborg N.B."/>
            <person name="Dmytriyev A."/>
            <person name="Lundby C."/>
            <person name="Olsen J.V."/>
        </authorList>
    </citation>
    <scope>PHOSPHORYLATION [LARGE SCALE ANALYSIS] AT SER-798</scope>
    <scope>IDENTIFICATION BY MASS SPECTROMETRY [LARGE SCALE ANALYSIS]</scope>
</reference>
<protein>
    <recommendedName>
        <fullName>TLR4 interactor with leucine rich repeats</fullName>
    </recommendedName>
    <alternativeName>
        <fullName>Leucine-rich repeat-containing protein KIAA0644 homolog</fullName>
    </alternativeName>
</protein>
<evidence type="ECO:0000250" key="1"/>
<evidence type="ECO:0000255" key="2"/>
<evidence type="ECO:0000256" key="3">
    <source>
        <dbReference type="SAM" id="MobiDB-lite"/>
    </source>
</evidence>
<evidence type="ECO:0000269" key="4">
    <source>
    </source>
</evidence>
<evidence type="ECO:0000305" key="5"/>
<evidence type="ECO:0007744" key="6">
    <source>
    </source>
</evidence>
<comment type="function">
    <text evidence="1">Component of the TLR4 signaling complex. Mediates the innate immune response to bacterial lipopolysaccharide (LPS) leading to cytokine secretion and the inflammatory response (By similarity).</text>
</comment>
<comment type="subunit">
    <text evidence="1">Belongs to the lipopolysaccharide (LPS) receptor, a multi-protein complex containing at least CD14, MD-2 and TLR4. Interacts with TLR4; this interaction is greatly enhanced following LPS stimulation (By similarity). Interacts with LPS (By similarity).</text>
</comment>
<comment type="subcellular location">
    <subcellularLocation>
        <location evidence="5">Membrane</location>
        <topology evidence="5">Single-pass type I membrane protein</topology>
    </subcellularLocation>
</comment>
<comment type="tissue specificity">
    <text evidence="4">Highly expressed in cortical astrocytes and in cerebellar granule neurons.</text>
</comment>
<comment type="PTM">
    <text evidence="1">N-glycolysaled.</text>
</comment>
<keyword id="KW-0325">Glycoprotein</keyword>
<keyword id="KW-0391">Immunity</keyword>
<keyword id="KW-0395">Inflammatory response</keyword>
<keyword id="KW-0399">Innate immunity</keyword>
<keyword id="KW-0433">Leucine-rich repeat</keyword>
<keyword id="KW-0472">Membrane</keyword>
<keyword id="KW-0597">Phosphoprotein</keyword>
<keyword id="KW-1185">Reference proteome</keyword>
<keyword id="KW-0677">Repeat</keyword>
<keyword id="KW-0732">Signal</keyword>
<keyword id="KW-0812">Transmembrane</keyword>
<keyword id="KW-1133">Transmembrane helix</keyword>
<gene>
    <name type="primary">Tril</name>
</gene>
<accession>Q496Z2</accession>
<organism>
    <name type="scientific">Rattus norvegicus</name>
    <name type="common">Rat</name>
    <dbReference type="NCBI Taxonomy" id="10116"/>
    <lineage>
        <taxon>Eukaryota</taxon>
        <taxon>Metazoa</taxon>
        <taxon>Chordata</taxon>
        <taxon>Craniata</taxon>
        <taxon>Vertebrata</taxon>
        <taxon>Euteleostomi</taxon>
        <taxon>Mammalia</taxon>
        <taxon>Eutheria</taxon>
        <taxon>Euarchontoglires</taxon>
        <taxon>Glires</taxon>
        <taxon>Rodentia</taxon>
        <taxon>Myomorpha</taxon>
        <taxon>Muroidea</taxon>
        <taxon>Muridae</taxon>
        <taxon>Murinae</taxon>
        <taxon>Rattus</taxon>
    </lineage>
</organism>